<evidence type="ECO:0000250" key="1">
    <source>
        <dbReference type="UniProtKB" id="P24230"/>
    </source>
</evidence>
<evidence type="ECO:0000255" key="2">
    <source>
        <dbReference type="PROSITE-ProRule" id="PRU00541"/>
    </source>
</evidence>
<evidence type="ECO:0000255" key="3">
    <source>
        <dbReference type="PROSITE-ProRule" id="PRU00542"/>
    </source>
</evidence>
<evidence type="ECO:0000269" key="4">
    <source>
    </source>
</evidence>
<evidence type="ECO:0000269" key="5">
    <source>
    </source>
</evidence>
<evidence type="ECO:0000269" key="6">
    <source>
    </source>
</evidence>
<evidence type="ECO:0000269" key="7">
    <source>
    </source>
</evidence>
<evidence type="ECO:0000269" key="8">
    <source>
    </source>
</evidence>
<evidence type="ECO:0000269" key="9">
    <source>
    </source>
</evidence>
<evidence type="ECO:0000303" key="10">
    <source>
    </source>
</evidence>
<evidence type="ECO:0000305" key="11"/>
<evidence type="ECO:0000305" key="12">
    <source>
    </source>
</evidence>
<evidence type="ECO:0000305" key="13">
    <source>
    </source>
</evidence>
<evidence type="ECO:0007744" key="14">
    <source>
        <dbReference type="PDB" id="1RIF"/>
    </source>
</evidence>
<evidence type="ECO:0007744" key="15">
    <source>
        <dbReference type="PDB" id="2OCA"/>
    </source>
</evidence>
<evidence type="ECO:0007829" key="16">
    <source>
        <dbReference type="PDB" id="1RIF"/>
    </source>
</evidence>
<evidence type="ECO:0007829" key="17">
    <source>
        <dbReference type="PDB" id="2OCA"/>
    </source>
</evidence>
<accession>P0DXF1</accession>
<accession>P20703</accession>
<organism>
    <name type="scientific">Enterobacteria phage T4</name>
    <name type="common">Bacteriophage T4</name>
    <dbReference type="NCBI Taxonomy" id="10665"/>
    <lineage>
        <taxon>Viruses</taxon>
        <taxon>Duplodnaviria</taxon>
        <taxon>Heunggongvirae</taxon>
        <taxon>Uroviricota</taxon>
        <taxon>Caudoviricetes</taxon>
        <taxon>Straboviridae</taxon>
        <taxon>Tevenvirinae</taxon>
        <taxon>Tequatrovirus</taxon>
    </lineage>
</organism>
<protein>
    <recommendedName>
        <fullName>ATP-dependent DNA helicase uvsW</fullName>
        <ecNumber evidence="12">5.6.2.4</ecNumber>
    </recommendedName>
    <alternativeName>
        <fullName evidence="11">DNA 3'-5' helicase UvsW</fullName>
    </alternativeName>
    <alternativeName>
        <fullName>Dar protein</fullName>
    </alternativeName>
</protein>
<organismHost>
    <name type="scientific">Escherichia coli</name>
    <dbReference type="NCBI Taxonomy" id="562"/>
</organismHost>
<dbReference type="EC" id="5.6.2.4" evidence="12"/>
<dbReference type="EMBL" id="AF158101">
    <property type="protein sequence ID" value="AAD42668.1"/>
    <property type="status" value="ALT_TERM"/>
    <property type="molecule type" value="Genomic_DNA"/>
</dbReference>
<dbReference type="EMBL" id="X56097">
    <property type="protein sequence ID" value="CAA39576.1"/>
    <property type="molecule type" value="Genomic_DNA"/>
</dbReference>
<dbReference type="EMBL" id="X14869">
    <property type="protein sequence ID" value="CAA33014.1"/>
    <property type="molecule type" value="Genomic_DNA"/>
</dbReference>
<dbReference type="PIR" id="PQ0097">
    <property type="entry name" value="S10498"/>
</dbReference>
<dbReference type="RefSeq" id="NP_049796.1">
    <property type="nucleotide sequence ID" value="NC_000866.4"/>
</dbReference>
<dbReference type="PDB" id="1RIF">
    <property type="method" value="X-ray"/>
    <property type="resolution" value="2.00 A"/>
    <property type="chains" value="A/B=1-282"/>
</dbReference>
<dbReference type="PDB" id="2OCA">
    <property type="method" value="X-ray"/>
    <property type="resolution" value="2.70 A"/>
    <property type="chains" value="A=1-502"/>
</dbReference>
<dbReference type="PDBsum" id="1RIF"/>
<dbReference type="PDBsum" id="2OCA"/>
<dbReference type="BMRB" id="P20703"/>
<dbReference type="SMR" id="P0DXF1"/>
<dbReference type="GeneID" id="1258733"/>
<dbReference type="KEGG" id="vg:1258733"/>
<dbReference type="EvolutionaryTrace" id="P20703"/>
<dbReference type="Proteomes" id="UP000009087">
    <property type="component" value="Segment"/>
</dbReference>
<dbReference type="GO" id="GO:0005524">
    <property type="term" value="F:ATP binding"/>
    <property type="evidence" value="ECO:0007669"/>
    <property type="project" value="UniProtKB-KW"/>
</dbReference>
<dbReference type="GO" id="GO:0003677">
    <property type="term" value="F:DNA binding"/>
    <property type="evidence" value="ECO:0007669"/>
    <property type="project" value="UniProtKB-KW"/>
</dbReference>
<dbReference type="GO" id="GO:0004386">
    <property type="term" value="F:helicase activity"/>
    <property type="evidence" value="ECO:0007669"/>
    <property type="project" value="UniProtKB-KW"/>
</dbReference>
<dbReference type="GO" id="GO:0016787">
    <property type="term" value="F:hydrolase activity"/>
    <property type="evidence" value="ECO:0007669"/>
    <property type="project" value="UniProtKB-KW"/>
</dbReference>
<dbReference type="CDD" id="cd18031">
    <property type="entry name" value="DEXHc_UvsW"/>
    <property type="match status" value="1"/>
</dbReference>
<dbReference type="Gene3D" id="3.30.780.20">
    <property type="match status" value="1"/>
</dbReference>
<dbReference type="Gene3D" id="3.40.50.300">
    <property type="entry name" value="P-loop containing nucleotide triphosphate hydrolases"/>
    <property type="match status" value="2"/>
</dbReference>
<dbReference type="InterPro" id="IPR006935">
    <property type="entry name" value="Helicase/UvrB_N"/>
</dbReference>
<dbReference type="InterPro" id="IPR014001">
    <property type="entry name" value="Helicase_ATP-bd"/>
</dbReference>
<dbReference type="InterPro" id="IPR001650">
    <property type="entry name" value="Helicase_C-like"/>
</dbReference>
<dbReference type="InterPro" id="IPR050742">
    <property type="entry name" value="Helicase_Restrict-Modif_Enz"/>
</dbReference>
<dbReference type="InterPro" id="IPR027417">
    <property type="entry name" value="P-loop_NTPase"/>
</dbReference>
<dbReference type="InterPro" id="IPR049409">
    <property type="entry name" value="UvsW_N"/>
</dbReference>
<dbReference type="InterPro" id="IPR049430">
    <property type="entry name" value="UvsW_N_sf"/>
</dbReference>
<dbReference type="PANTHER" id="PTHR47396:SF1">
    <property type="entry name" value="ATP-DEPENDENT HELICASE IRC3-RELATED"/>
    <property type="match status" value="1"/>
</dbReference>
<dbReference type="PANTHER" id="PTHR47396">
    <property type="entry name" value="TYPE I RESTRICTION ENZYME ECOKI R PROTEIN"/>
    <property type="match status" value="1"/>
</dbReference>
<dbReference type="Pfam" id="PF00271">
    <property type="entry name" value="Helicase_C"/>
    <property type="match status" value="1"/>
</dbReference>
<dbReference type="Pfam" id="PF04851">
    <property type="entry name" value="ResIII"/>
    <property type="match status" value="1"/>
</dbReference>
<dbReference type="Pfam" id="PF21241">
    <property type="entry name" value="UvsW_N"/>
    <property type="match status" value="1"/>
</dbReference>
<dbReference type="SMART" id="SM00487">
    <property type="entry name" value="DEXDc"/>
    <property type="match status" value="1"/>
</dbReference>
<dbReference type="SMART" id="SM00490">
    <property type="entry name" value="HELICc"/>
    <property type="match status" value="1"/>
</dbReference>
<dbReference type="SUPFAM" id="SSF52540">
    <property type="entry name" value="P-loop containing nucleoside triphosphate hydrolases"/>
    <property type="match status" value="2"/>
</dbReference>
<dbReference type="PROSITE" id="PS51192">
    <property type="entry name" value="HELICASE_ATP_BIND_1"/>
    <property type="match status" value="1"/>
</dbReference>
<dbReference type="PROSITE" id="PS51194">
    <property type="entry name" value="HELICASE_CTER"/>
    <property type="match status" value="1"/>
</dbReference>
<name>UVSW_BPT4</name>
<keyword id="KW-0002">3D-structure</keyword>
<keyword id="KW-0067">ATP-binding</keyword>
<keyword id="KW-0238">DNA-binding</keyword>
<keyword id="KW-0347">Helicase</keyword>
<keyword id="KW-0378">Hydrolase</keyword>
<keyword id="KW-0413">Isomerase</keyword>
<keyword id="KW-0426">Late protein</keyword>
<keyword id="KW-0547">Nucleotide-binding</keyword>
<keyword id="KW-1185">Reference proteome</keyword>
<feature type="chain" id="PRO_0000164988" description="ATP-dependent DNA helicase uvsW">
    <location>
        <begin position="1"/>
        <end position="502"/>
    </location>
</feature>
<feature type="domain" description="Helicase ATP-binding" evidence="2">
    <location>
        <begin position="122"/>
        <end position="280"/>
    </location>
</feature>
<feature type="domain" description="Helicase C-terminal" evidence="3">
    <location>
        <begin position="335"/>
        <end position="501"/>
    </location>
</feature>
<feature type="short sequence motif" description="DEAH box" evidence="2">
    <location>
        <begin position="232"/>
        <end position="235"/>
    </location>
</feature>
<feature type="binding site" evidence="2">
    <location>
        <begin position="135"/>
        <end position="142"/>
    </location>
    <ligand>
        <name>ATP</name>
        <dbReference type="ChEBI" id="CHEBI:30616"/>
    </ligand>
</feature>
<feature type="mutagenesis site" description="Loss of helicase and ATPase activity. Does not catalyze HJ branch migration, still binds HJ DNA." evidence="5 9">
    <original>K</original>
    <variation>R</variation>
    <location>
        <position position="141"/>
    </location>
</feature>
<feature type="strand" evidence="16">
    <location>
        <begin position="3"/>
        <end position="8"/>
    </location>
</feature>
<feature type="turn" evidence="16">
    <location>
        <begin position="9"/>
        <end position="11"/>
    </location>
</feature>
<feature type="strand" evidence="16">
    <location>
        <begin position="12"/>
        <end position="16"/>
    </location>
</feature>
<feature type="helix" evidence="16">
    <location>
        <begin position="19"/>
        <end position="28"/>
    </location>
</feature>
<feature type="strand" evidence="16">
    <location>
        <begin position="30"/>
        <end position="32"/>
    </location>
</feature>
<feature type="turn" evidence="16">
    <location>
        <begin position="34"/>
        <end position="37"/>
    </location>
</feature>
<feature type="helix" evidence="16">
    <location>
        <begin position="40"/>
        <end position="43"/>
    </location>
</feature>
<feature type="strand" evidence="16">
    <location>
        <begin position="49"/>
        <end position="54"/>
    </location>
</feature>
<feature type="strand" evidence="16">
    <location>
        <begin position="59"/>
        <end position="61"/>
    </location>
</feature>
<feature type="helix" evidence="16">
    <location>
        <begin position="62"/>
        <end position="67"/>
    </location>
</feature>
<feature type="helix" evidence="16">
    <location>
        <begin position="68"/>
        <end position="74"/>
    </location>
</feature>
<feature type="strand" evidence="16">
    <location>
        <begin position="79"/>
        <end position="81"/>
    </location>
</feature>
<feature type="helix" evidence="16">
    <location>
        <begin position="83"/>
        <end position="86"/>
    </location>
</feature>
<feature type="helix" evidence="16">
    <location>
        <begin position="93"/>
        <end position="101"/>
    </location>
</feature>
<feature type="strand" evidence="17">
    <location>
        <begin position="105"/>
        <end position="107"/>
    </location>
</feature>
<feature type="strand" evidence="17">
    <location>
        <begin position="110"/>
        <end position="112"/>
    </location>
</feature>
<feature type="helix" evidence="16">
    <location>
        <begin position="116"/>
        <end position="128"/>
    </location>
</feature>
<feature type="strand" evidence="16">
    <location>
        <begin position="129"/>
        <end position="133"/>
    </location>
</feature>
<feature type="turn" evidence="17">
    <location>
        <begin position="138"/>
        <end position="140"/>
    </location>
</feature>
<feature type="helix" evidence="16">
    <location>
        <begin position="141"/>
        <end position="155"/>
    </location>
</feature>
<feature type="strand" evidence="16">
    <location>
        <begin position="157"/>
        <end position="163"/>
    </location>
</feature>
<feature type="helix" evidence="16">
    <location>
        <begin position="167"/>
        <end position="179"/>
    </location>
</feature>
<feature type="helix" evidence="16">
    <location>
        <begin position="185"/>
        <end position="187"/>
    </location>
</feature>
<feature type="strand" evidence="16">
    <location>
        <begin position="188"/>
        <end position="190"/>
    </location>
</feature>
<feature type="helix" evidence="17">
    <location>
        <begin position="192"/>
        <end position="194"/>
    </location>
</feature>
<feature type="helix" evidence="17">
    <location>
        <begin position="199"/>
        <end position="201"/>
    </location>
</feature>
<feature type="strand" evidence="16">
    <location>
        <begin position="206"/>
        <end position="210"/>
    </location>
</feature>
<feature type="helix" evidence="16">
    <location>
        <begin position="212"/>
        <end position="215"/>
    </location>
</feature>
<feature type="helix" evidence="16">
    <location>
        <begin position="220"/>
        <end position="225"/>
    </location>
</feature>
<feature type="strand" evidence="16">
    <location>
        <begin position="226"/>
        <end position="232"/>
    </location>
</feature>
<feature type="helix" evidence="16">
    <location>
        <begin position="234"/>
        <end position="236"/>
    </location>
</feature>
<feature type="helix" evidence="16">
    <location>
        <begin position="239"/>
        <end position="245"/>
    </location>
</feature>
<feature type="turn" evidence="16">
    <location>
        <begin position="246"/>
        <end position="248"/>
    </location>
</feature>
<feature type="strand" evidence="16">
    <location>
        <begin position="254"/>
        <end position="258"/>
    </location>
</feature>
<feature type="helix" evidence="17">
    <location>
        <begin position="262"/>
        <end position="264"/>
    </location>
</feature>
<feature type="helix" evidence="16">
    <location>
        <begin position="269"/>
        <end position="276"/>
    </location>
</feature>
<feature type="strand" evidence="16">
    <location>
        <begin position="278"/>
        <end position="280"/>
    </location>
</feature>
<feature type="strand" evidence="17">
    <location>
        <begin position="298"/>
        <end position="305"/>
    </location>
</feature>
<feature type="helix" evidence="17">
    <location>
        <begin position="308"/>
        <end position="314"/>
    </location>
</feature>
<feature type="helix" evidence="17">
    <location>
        <begin position="319"/>
        <end position="327"/>
    </location>
</feature>
<feature type="helix" evidence="17">
    <location>
        <begin position="330"/>
        <end position="344"/>
    </location>
</feature>
<feature type="turn" evidence="17">
    <location>
        <begin position="345"/>
        <end position="347"/>
    </location>
</feature>
<feature type="strand" evidence="17">
    <location>
        <begin position="349"/>
        <end position="356"/>
    </location>
</feature>
<feature type="helix" evidence="17">
    <location>
        <begin position="357"/>
        <end position="368"/>
    </location>
</feature>
<feature type="strand" evidence="17">
    <location>
        <begin position="372"/>
        <end position="380"/>
    </location>
</feature>
<feature type="helix" evidence="17">
    <location>
        <begin position="383"/>
        <end position="395"/>
    </location>
</feature>
<feature type="strand" evidence="17">
    <location>
        <begin position="400"/>
        <end position="404"/>
    </location>
</feature>
<feature type="helix" evidence="17">
    <location>
        <begin position="405"/>
        <end position="410"/>
    </location>
</feature>
<feature type="strand" evidence="17">
    <location>
        <begin position="416"/>
        <end position="424"/>
    </location>
</feature>
<feature type="helix" evidence="17">
    <location>
        <begin position="431"/>
        <end position="440"/>
    </location>
</feature>
<feature type="strand" evidence="17">
    <location>
        <begin position="450"/>
        <end position="457"/>
    </location>
</feature>
<feature type="strand" evidence="17">
    <location>
        <begin position="463"/>
        <end position="466"/>
    </location>
</feature>
<feature type="helix" evidence="17">
    <location>
        <begin position="476"/>
        <end position="490"/>
    </location>
</feature>
<feature type="strand" evidence="17">
    <location>
        <begin position="495"/>
        <end position="501"/>
    </location>
</feature>
<sequence length="502" mass="57739">MDIKVHFHDFSHVRIDCEESTFHELRDFFSFEADGYRFNPRFRYGNWDGRIRLLDYNRLLPFGLVGQIKKFCDNFGYKAWIDPQINEKEELSRKDFDEWLSKLEIYSGNKRIEPHWYQKDAVFEGLVNRRRILNLPTSAGKSLIQALLARYYLENYEGKILIIVPTTALTTQMADDFVDYRLFSHAMIKKIGGGASKDDKYKNDAPVVVGTWQTVVKQPKEWFSQFGMMMNDECHLATGKSISSIISGLNNCMFKFGLSGSLRDGKANIMQYVGMFGEIFKPVTTSKLMEDGQVTELKINSIFLRYPDEFTTKLKGKTYQEEIKIITGLSKRNKWIAKLAIKLAQKDENAFVMFKHVSHGKAIFDLIKNEYDKVYYVSGEVDTETRNIMKTLAENGKGIIIVASYGVFSTGISVKNLHHVVLAHGVKSKIIVLQTIGRVLRKHGSKTIATVWDLIDSAGVKPKSANTKKKYVHLNYLLKHGIDRIQRYADEKFNYVMKTVNL</sequence>
<gene>
    <name evidence="10" type="primary">uvsW</name>
    <name type="synonym">dar</name>
</gene>
<reference key="1">
    <citation type="journal article" date="1997" name="EMBO J.">
        <title>Bacteriophage T4 UvsW protein is a helicase involved in recombination, repair and the regulation of DNA replication origins.</title>
        <authorList>
            <person name="Carles-Kinch K."/>
            <person name="George J.W."/>
            <person name="Kreuzer K.N."/>
        </authorList>
    </citation>
    <scope>NUCLEOTIDE SEQUENCE [GENOMIC DNA]</scope>
    <scope>FUNCTION</scope>
    <scope>FUNCTION AS A HELICASE</scope>
    <scope>FUNCTION AS AN ATPASE</scope>
    <scope>COFACTOR</scope>
    <scope>MUTAGENESIS OF LYS-141</scope>
</reference>
<reference key="2">
    <citation type="journal article" date="2003" name="Microbiol. Mol. Biol. Rev.">
        <title>Bacteriophage T4 genome.</title>
        <authorList>
            <person name="Miller E.S."/>
            <person name="Kutter E."/>
            <person name="Mosig G."/>
            <person name="Arisaka F."/>
            <person name="Kunisawa T."/>
            <person name="Ruger W."/>
        </authorList>
    </citation>
    <scope>NUCLEOTIDE SEQUENCE [LARGE SCALE GENOMIC DNA]</scope>
</reference>
<reference key="3">
    <citation type="journal article" date="1990" name="Nucleic Acids Res.">
        <title>The nucleotide sequence of the region of bacteriophage T4 inh(lip)-hoc genes.</title>
        <authorList>
            <person name="Kaliman A.V."/>
            <person name="Khasanova M.A."/>
            <person name="Kryukov V.M."/>
            <person name="Tanyashin V.I."/>
            <person name="Bayev A.A."/>
        </authorList>
    </citation>
    <scope>NUCLEOTIDE SEQUENCE [GENOMIC DNA] OF 1-139</scope>
</reference>
<reference key="4">
    <citation type="journal article" date="1990" name="J. Mol. Biol.">
        <title>Expression and function of the uvsW gene of bacteriophage T4.</title>
        <authorList>
            <person name="Derr L.K."/>
            <person name="Kreuzer K.N."/>
        </authorList>
    </citation>
    <scope>NUCLEOTIDE SEQUENCE [GENOMIC DNA] OF 1-15</scope>
    <scope>FUNCTION</scope>
</reference>
<reference key="5">
    <citation type="journal article" date="2007" name="J. Biol. Chem.">
        <title>The T4 phage UvsW protein contains both DNA unwinding and strand annealing activities.</title>
        <authorList>
            <person name="Nelson S.W."/>
            <person name="Benkovic S.J."/>
        </authorList>
    </citation>
    <scope>SEQUENCE REVISION TO C-TERMINUS</scope>
    <scope>PROBABLE FUNCTION AS A 3'-5' HELICASE</scope>
    <scope>FUNCTION AS AN ATPASE</scope>
    <scope>CATALYTIC ACTIVITY</scope>
    <scope>ACTIVITY REGULATION</scope>
    <scope>BIOPHYSICOCHEMICAL PROPERTIES</scope>
    <scope>SUBUNIT</scope>
    <scope>INTERACTION WITH UVSW.1</scope>
</reference>
<reference key="6">
    <citation type="journal article" date="2007" name="J. Biol. Chem.">
        <title>The phage T4 protein UvsW drives Holliday junction branch migration.</title>
        <authorList>
            <person name="Webb M.R."/>
            <person name="Plank J.L."/>
            <person name="Long D.T."/>
            <person name="Hsieh T.S."/>
            <person name="Kreuzer K.N."/>
        </authorList>
    </citation>
    <scope>FUNCTION AS A HELICASE</scope>
    <scope>FUNCTION IN BRANCH MIGRATION</scope>
    <scope>PROBABLE FUNCTION IN REPLICATION FORK REGRESSION</scope>
    <scope>COFACTOR</scope>
    <scope>ACTIVITY REGULATION</scope>
    <scope>DNA-BINDING</scope>
</reference>
<reference key="7">
    <citation type="journal article" date="2013" name="Nat. Commun.">
        <title>RecG and UvsW catalyse robust DNA rewinding critical for stalled DNA replication fork rescue.</title>
        <authorList>
            <person name="Manosas M."/>
            <person name="Perumal S.K."/>
            <person name="Bianco P."/>
            <person name="Ritort F."/>
            <person name="Benkovic S.J."/>
            <person name="Croquette V."/>
        </authorList>
    </citation>
    <scope>FUNCTION</scope>
    <scope>WINDS AND UNWINDS DNA</scope>
</reference>
<reference key="8">
    <citation type="journal article" date="2013" name="J. Mol. Biol.">
        <title>Interaction of T4 UvsW helicase and single-stranded DNA binding protein gp32 through its carboxy-terminal acidic tail.</title>
        <authorList>
            <person name="Perumal S.K."/>
            <person name="Nelson S.W."/>
            <person name="Benkovic S.J."/>
        </authorList>
    </citation>
    <scope>FUNCTION</scope>
    <scope>ACTIVITY REGULATION</scope>
    <scope>INTERACTION WITH GP32</scope>
</reference>
<reference evidence="14" key="9">
    <citation type="journal article" date="2004" name="Structure">
        <title>The crystal structure of the UvsW helicase from bacteriophage T4.</title>
        <authorList>
            <person name="Sickmier E.A."/>
            <person name="Kreuzer K.N."/>
            <person name="White S.W."/>
        </authorList>
    </citation>
    <scope>X-RAY CRYSTALLOGRAPHY (2.0 ANGSTROMS) OF 1-282</scope>
</reference>
<reference evidence="15" key="10">
    <citation type="journal article" date="2007" name="J. Biol. Chem.">
        <title>Crystallographic and NMR analyses of UvsW and UvsW.1 from bacteriophage T4.</title>
        <authorList>
            <person name="Kerr I.D."/>
            <person name="Sivakolundu S."/>
            <person name="Li Z."/>
            <person name="Buchsbaum J.C."/>
            <person name="Knox L.A."/>
            <person name="Kriwacki R."/>
            <person name="White S.W."/>
        </authorList>
    </citation>
    <scope>X-RAY CRYSTALLOGRAPHY (2.70 ANGSTROMS)</scope>
</reference>
<proteinExistence type="evidence at protein level"/>
<comment type="function">
    <text evidence="1 4 5 6 7 8 9 13">Plays important roles in recombination-dependent DNA repair and the reorganization of stalled replication forks during viral DNA synthesis (PubMed:9233823, PubMed:2388264). Active on in vivo-derived T4 DNA; viral DNA is highly modified by hydroxymethylation and glucosylation of cytosine residues (PubMed:17823128). Helps process Holliday junction (HJ) intermediates to mature products by catalyzing branch migration (PubMed:17823128, PubMed:23732982). Probably able to catalyze replication fork regression (Probable) (PubMed:17823128). Unwinds HJ and Y-branched but not linear double-stranded (ds)DNA; unwinding requires ATP and Mg(2+) (PubMed:9233823, PubMed:17823128). Unwinds dsDNA with a 3'-single-stranded (ss)DNA overhang, suggesting it is a 3'-5' helicase (PubMed:17092935). Another study does not find this activity (PubMed:17823128). Unwinds D- and R-loops (PubMed:17092935). Also anneals ssDNA; ATP stimulates annealing (PubMed:17092935, PubMed:24013402). Has ssDNA and dsDNA-stimulated ATPase activity, also hydrolyzes GTP in the presence of DNA (PubMed:17092935).</text>
</comment>
<comment type="catalytic activity">
    <reaction evidence="12">
        <text>Couples ATP hydrolysis with the unwinding of duplex DNA by translocating in the 3'-5' direction.</text>
        <dbReference type="EC" id="5.6.2.4"/>
    </reaction>
</comment>
<comment type="catalytic activity">
    <reaction evidence="4 9">
        <text>ATP + H2O = ADP + phosphate + H(+)</text>
        <dbReference type="Rhea" id="RHEA:13065"/>
        <dbReference type="ChEBI" id="CHEBI:15377"/>
        <dbReference type="ChEBI" id="CHEBI:15378"/>
        <dbReference type="ChEBI" id="CHEBI:30616"/>
        <dbReference type="ChEBI" id="CHEBI:43474"/>
        <dbReference type="ChEBI" id="CHEBI:456216"/>
        <dbReference type="EC" id="5.6.2.4"/>
    </reaction>
</comment>
<comment type="cofactor">
    <cofactor evidence="5 9">
        <name>Mg(2+)</name>
        <dbReference type="ChEBI" id="CHEBI:18420"/>
    </cofactor>
</comment>
<comment type="activity regulation">
    <text evidence="4 5 6">Unwinding activity is strongly stimulated by single-stranded binding protein gp32, the ssDNA annealing activity is partially inhibited by gp32 and strongly inhibited by ATP-gamma-S (PubMed:17092935, PubMed:23732982). Another study did not find gp32 stimulation of helicase activity (PubMed:17823128). Holliday junction (HJ) branch migration is inhibited by ATP-gamma-S (PubMed:17823128).</text>
</comment>
<comment type="biophysicochemical properties">
    <kinetics>
        <KM evidence="4">170 uM for ATP</KM>
        <text evidence="4">kcat is 50 sec(-1).</text>
    </kinetics>
</comment>
<comment type="subunit">
    <text evidence="4 6">Probably interacts with UvsW.1 (Probable) (PubMed:17092935). Interacts with gp32 (PubMed:23732982).</text>
</comment>
<comment type="caution">
    <text evidence="4">Originally thought to also encode the following gene uvsW1 (PubMed:17092935).</text>
</comment>
<comment type="sequence caution" evidence="4">
    <conflict type="erroneous termination">
        <sequence resource="EMBL-CDS" id="AAD42668"/>
    </conflict>
    <text>Truncated C-terminus.</text>
</comment>